<evidence type="ECO:0000255" key="1">
    <source>
        <dbReference type="HAMAP-Rule" id="MF_00235"/>
    </source>
</evidence>
<feature type="chain" id="PRO_0000158753" description="Adenylate kinase">
    <location>
        <begin position="1"/>
        <end position="213"/>
    </location>
</feature>
<feature type="region of interest" description="NMP" evidence="1">
    <location>
        <begin position="34"/>
        <end position="63"/>
    </location>
</feature>
<feature type="region of interest" description="LID" evidence="1">
    <location>
        <begin position="129"/>
        <end position="162"/>
    </location>
</feature>
<feature type="binding site" evidence="1">
    <location>
        <begin position="14"/>
        <end position="19"/>
    </location>
    <ligand>
        <name>ATP</name>
        <dbReference type="ChEBI" id="CHEBI:30616"/>
    </ligand>
</feature>
<feature type="binding site" evidence="1">
    <location>
        <position position="35"/>
    </location>
    <ligand>
        <name>AMP</name>
        <dbReference type="ChEBI" id="CHEBI:456215"/>
    </ligand>
</feature>
<feature type="binding site" evidence="1">
    <location>
        <position position="40"/>
    </location>
    <ligand>
        <name>AMP</name>
        <dbReference type="ChEBI" id="CHEBI:456215"/>
    </ligand>
</feature>
<feature type="binding site" evidence="1">
    <location>
        <begin position="61"/>
        <end position="63"/>
    </location>
    <ligand>
        <name>AMP</name>
        <dbReference type="ChEBI" id="CHEBI:456215"/>
    </ligand>
</feature>
<feature type="binding site" evidence="1">
    <location>
        <begin position="89"/>
        <end position="92"/>
    </location>
    <ligand>
        <name>AMP</name>
        <dbReference type="ChEBI" id="CHEBI:456215"/>
    </ligand>
</feature>
<feature type="binding site" evidence="1">
    <location>
        <position position="96"/>
    </location>
    <ligand>
        <name>AMP</name>
        <dbReference type="ChEBI" id="CHEBI:456215"/>
    </ligand>
</feature>
<feature type="binding site" evidence="1">
    <location>
        <position position="130"/>
    </location>
    <ligand>
        <name>ATP</name>
        <dbReference type="ChEBI" id="CHEBI:30616"/>
    </ligand>
</feature>
<feature type="binding site" evidence="1">
    <location>
        <position position="133"/>
    </location>
    <ligand>
        <name>Zn(2+)</name>
        <dbReference type="ChEBI" id="CHEBI:29105"/>
        <note>structural</note>
    </ligand>
</feature>
<feature type="binding site" evidence="1">
    <location>
        <position position="136"/>
    </location>
    <ligand>
        <name>Zn(2+)</name>
        <dbReference type="ChEBI" id="CHEBI:29105"/>
        <note>structural</note>
    </ligand>
</feature>
<feature type="binding site" evidence="1">
    <location>
        <begin position="139"/>
        <end position="140"/>
    </location>
    <ligand>
        <name>ATP</name>
        <dbReference type="ChEBI" id="CHEBI:30616"/>
    </ligand>
</feature>
<feature type="binding site" evidence="1">
    <location>
        <position position="149"/>
    </location>
    <ligand>
        <name>Zn(2+)</name>
        <dbReference type="ChEBI" id="CHEBI:29105"/>
        <note>structural</note>
    </ligand>
</feature>
<feature type="binding site" evidence="1">
    <location>
        <position position="152"/>
    </location>
    <ligand>
        <name>Zn(2+)</name>
        <dbReference type="ChEBI" id="CHEBI:29105"/>
        <note>structural</note>
    </ligand>
</feature>
<feature type="binding site" evidence="1">
    <location>
        <position position="159"/>
    </location>
    <ligand>
        <name>AMP</name>
        <dbReference type="ChEBI" id="CHEBI:456215"/>
    </ligand>
</feature>
<feature type="binding site" evidence="1">
    <location>
        <position position="170"/>
    </location>
    <ligand>
        <name>AMP</name>
        <dbReference type="ChEBI" id="CHEBI:456215"/>
    </ligand>
</feature>
<feature type="binding site" evidence="1">
    <location>
        <position position="198"/>
    </location>
    <ligand>
        <name>ATP</name>
        <dbReference type="ChEBI" id="CHEBI:30616"/>
    </ligand>
</feature>
<name>KAD_CHLPN</name>
<comment type="function">
    <text evidence="1">Catalyzes the reversible transfer of the terminal phosphate group between ATP and AMP. Plays an important role in cellular energy homeostasis and in adenine nucleotide metabolism.</text>
</comment>
<comment type="catalytic activity">
    <reaction evidence="1">
        <text>AMP + ATP = 2 ADP</text>
        <dbReference type="Rhea" id="RHEA:12973"/>
        <dbReference type="ChEBI" id="CHEBI:30616"/>
        <dbReference type="ChEBI" id="CHEBI:456215"/>
        <dbReference type="ChEBI" id="CHEBI:456216"/>
        <dbReference type="EC" id="2.7.4.3"/>
    </reaction>
</comment>
<comment type="pathway">
    <text evidence="1">Purine metabolism; AMP biosynthesis via salvage pathway; AMP from ADP: step 1/1.</text>
</comment>
<comment type="subunit">
    <text evidence="1">Monomer.</text>
</comment>
<comment type="subcellular location">
    <subcellularLocation>
        <location evidence="1">Cytoplasm</location>
    </subcellularLocation>
</comment>
<comment type="domain">
    <text evidence="1">Consists of three domains, a large central CORE domain and two small peripheral domains, NMPbind and LID, which undergo movements during catalysis. The LID domain closes over the site of phosphoryl transfer upon ATP binding. Assembling and dissambling the active center during each catalytic cycle provides an effective means to prevent ATP hydrolysis. Some bacteria have evolved a zinc-coordinating structure that stabilizes the LID domain.</text>
</comment>
<comment type="similarity">
    <text evidence="1">Belongs to the adenylate kinase family.</text>
</comment>
<organism>
    <name type="scientific">Chlamydia pneumoniae</name>
    <name type="common">Chlamydophila pneumoniae</name>
    <dbReference type="NCBI Taxonomy" id="83558"/>
    <lineage>
        <taxon>Bacteria</taxon>
        <taxon>Pseudomonadati</taxon>
        <taxon>Chlamydiota</taxon>
        <taxon>Chlamydiia</taxon>
        <taxon>Chlamydiales</taxon>
        <taxon>Chlamydiaceae</taxon>
        <taxon>Chlamydia/Chlamydophila group</taxon>
        <taxon>Chlamydia</taxon>
    </lineage>
</organism>
<gene>
    <name evidence="1" type="primary">adk</name>
    <name type="synonym">AK</name>
    <name type="ordered locus">CPn_0244</name>
    <name type="ordered locus">CP_0518</name>
    <name type="ordered locus">CpB0251</name>
</gene>
<sequence>MTKGSVFIIMGPPGSGKGTQSQYLANRIGLPHISTGDLLRAIIREGTPNGLKAKAYLDKGAFVPSDFVWEILKEKLQSQACSKGCIIDGFPRTLDQAHLLDSFLMDVHSNYTVIFLEISEDEILKRVCSRFLCPSCSRIYNTSQGHTECPDCHVPLIRRSDDTPEIIKERLTKYQERTAPVIAYYDSLGKLCRVSSENKEDLVFEDILKCIYK</sequence>
<keyword id="KW-0067">ATP-binding</keyword>
<keyword id="KW-0963">Cytoplasm</keyword>
<keyword id="KW-0418">Kinase</keyword>
<keyword id="KW-0479">Metal-binding</keyword>
<keyword id="KW-0545">Nucleotide biosynthesis</keyword>
<keyword id="KW-0547">Nucleotide-binding</keyword>
<keyword id="KW-0808">Transferase</keyword>
<keyword id="KW-0862">Zinc</keyword>
<accession>Q9Z8U0</accession>
<accession>Q9JQA4</accession>
<dbReference type="EC" id="2.7.4.3" evidence="1"/>
<dbReference type="EMBL" id="AB022016">
    <property type="protein sequence ID" value="BAA77386.1"/>
    <property type="molecule type" value="Genomic_DNA"/>
</dbReference>
<dbReference type="EMBL" id="AE001363">
    <property type="protein sequence ID" value="AAD18397.1"/>
    <property type="molecule type" value="Genomic_DNA"/>
</dbReference>
<dbReference type="EMBL" id="AE002161">
    <property type="protein sequence ID" value="AAF38344.1"/>
    <property type="molecule type" value="Genomic_DNA"/>
</dbReference>
<dbReference type="EMBL" id="BA000008">
    <property type="protein sequence ID" value="BAA98454.1"/>
    <property type="molecule type" value="Genomic_DNA"/>
</dbReference>
<dbReference type="EMBL" id="AE009440">
    <property type="protein sequence ID" value="AAP98184.1"/>
    <property type="molecule type" value="Genomic_DNA"/>
</dbReference>
<dbReference type="PIR" id="D86521">
    <property type="entry name" value="D86521"/>
</dbReference>
<dbReference type="PIR" id="H72100">
    <property type="entry name" value="H72100"/>
</dbReference>
<dbReference type="RefSeq" id="NP_224453.1">
    <property type="nucleotide sequence ID" value="NC_000922.1"/>
</dbReference>
<dbReference type="RefSeq" id="WP_010882896.1">
    <property type="nucleotide sequence ID" value="NZ_LN847257.1"/>
</dbReference>
<dbReference type="SMR" id="Q9Z8U0"/>
<dbReference type="STRING" id="406984.CPK_ORF00755"/>
<dbReference type="GeneID" id="45050291"/>
<dbReference type="KEGG" id="cpa:CP_0518"/>
<dbReference type="KEGG" id="cpj:adk"/>
<dbReference type="KEGG" id="cpn:CPn_0244"/>
<dbReference type="KEGG" id="cpt:CpB0251"/>
<dbReference type="PATRIC" id="fig|115713.3.peg.276"/>
<dbReference type="eggNOG" id="COG0563">
    <property type="taxonomic scope" value="Bacteria"/>
</dbReference>
<dbReference type="HOGENOM" id="CLU_032354_1_2_0"/>
<dbReference type="OrthoDB" id="9805030at2"/>
<dbReference type="UniPathway" id="UPA00588">
    <property type="reaction ID" value="UER00649"/>
</dbReference>
<dbReference type="Proteomes" id="UP000000583">
    <property type="component" value="Chromosome"/>
</dbReference>
<dbReference type="Proteomes" id="UP000000801">
    <property type="component" value="Chromosome"/>
</dbReference>
<dbReference type="GO" id="GO:0005737">
    <property type="term" value="C:cytoplasm"/>
    <property type="evidence" value="ECO:0007669"/>
    <property type="project" value="UniProtKB-SubCell"/>
</dbReference>
<dbReference type="GO" id="GO:0004017">
    <property type="term" value="F:adenylate kinase activity"/>
    <property type="evidence" value="ECO:0007669"/>
    <property type="project" value="UniProtKB-UniRule"/>
</dbReference>
<dbReference type="GO" id="GO:0005524">
    <property type="term" value="F:ATP binding"/>
    <property type="evidence" value="ECO:0007669"/>
    <property type="project" value="UniProtKB-UniRule"/>
</dbReference>
<dbReference type="GO" id="GO:0046872">
    <property type="term" value="F:metal ion binding"/>
    <property type="evidence" value="ECO:0007669"/>
    <property type="project" value="UniProtKB-KW"/>
</dbReference>
<dbReference type="GO" id="GO:0044209">
    <property type="term" value="P:AMP salvage"/>
    <property type="evidence" value="ECO:0007669"/>
    <property type="project" value="UniProtKB-UniRule"/>
</dbReference>
<dbReference type="CDD" id="cd01428">
    <property type="entry name" value="ADK"/>
    <property type="match status" value="1"/>
</dbReference>
<dbReference type="Gene3D" id="3.40.50.300">
    <property type="entry name" value="P-loop containing nucleotide triphosphate hydrolases"/>
    <property type="match status" value="1"/>
</dbReference>
<dbReference type="HAMAP" id="MF_00235">
    <property type="entry name" value="Adenylate_kinase_Adk"/>
    <property type="match status" value="1"/>
</dbReference>
<dbReference type="InterPro" id="IPR006259">
    <property type="entry name" value="Adenyl_kin_sub"/>
</dbReference>
<dbReference type="InterPro" id="IPR000850">
    <property type="entry name" value="Adenylat/UMP-CMP_kin"/>
</dbReference>
<dbReference type="InterPro" id="IPR033690">
    <property type="entry name" value="Adenylat_kinase_CS"/>
</dbReference>
<dbReference type="InterPro" id="IPR027417">
    <property type="entry name" value="P-loop_NTPase"/>
</dbReference>
<dbReference type="NCBIfam" id="TIGR01351">
    <property type="entry name" value="adk"/>
    <property type="match status" value="1"/>
</dbReference>
<dbReference type="NCBIfam" id="NF001381">
    <property type="entry name" value="PRK00279.1-3"/>
    <property type="match status" value="1"/>
</dbReference>
<dbReference type="NCBIfam" id="NF001385">
    <property type="entry name" value="PRK00279.2-3"/>
    <property type="match status" value="1"/>
</dbReference>
<dbReference type="PANTHER" id="PTHR23359">
    <property type="entry name" value="NUCLEOTIDE KINASE"/>
    <property type="match status" value="1"/>
</dbReference>
<dbReference type="Pfam" id="PF00406">
    <property type="entry name" value="ADK"/>
    <property type="match status" value="1"/>
</dbReference>
<dbReference type="PRINTS" id="PR00094">
    <property type="entry name" value="ADENYLTKNASE"/>
</dbReference>
<dbReference type="SUPFAM" id="SSF52540">
    <property type="entry name" value="P-loop containing nucleoside triphosphate hydrolases"/>
    <property type="match status" value="1"/>
</dbReference>
<dbReference type="PROSITE" id="PS00113">
    <property type="entry name" value="ADENYLATE_KINASE"/>
    <property type="match status" value="1"/>
</dbReference>
<protein>
    <recommendedName>
        <fullName evidence="1">Adenylate kinase</fullName>
        <shortName evidence="1">AK</shortName>
        <ecNumber evidence="1">2.7.4.3</ecNumber>
    </recommendedName>
    <alternativeName>
        <fullName evidence="1">ATP-AMP transphosphorylase</fullName>
    </alternativeName>
    <alternativeName>
        <fullName evidence="1">ATP:AMP phosphotransferase</fullName>
    </alternativeName>
    <alternativeName>
        <fullName evidence="1">Adenylate monophosphate kinase</fullName>
    </alternativeName>
</protein>
<reference key="1">
    <citation type="submission" date="1999-01" db="EMBL/GenBank/DDBJ databases">
        <title>Chlamydia pneumoniae adenylate kinase gene.</title>
        <authorList>
            <person name="Miura K."/>
        </authorList>
    </citation>
    <scope>NUCLEOTIDE SEQUENCE [GENOMIC DNA]</scope>
    <source>
        <strain>J138</strain>
    </source>
</reference>
<reference key="2">
    <citation type="journal article" date="1999" name="Nat. Genet.">
        <title>Comparative genomes of Chlamydia pneumoniae and C. trachomatis.</title>
        <authorList>
            <person name="Kalman S."/>
            <person name="Mitchell W.P."/>
            <person name="Marathe R."/>
            <person name="Lammel C.J."/>
            <person name="Fan J."/>
            <person name="Hyman R.W."/>
            <person name="Olinger L."/>
            <person name="Grimwood J."/>
            <person name="Davis R.W."/>
            <person name="Stephens R.S."/>
        </authorList>
    </citation>
    <scope>NUCLEOTIDE SEQUENCE [LARGE SCALE GENOMIC DNA]</scope>
    <source>
        <strain>CWL029</strain>
    </source>
</reference>
<reference key="3">
    <citation type="journal article" date="2000" name="Nucleic Acids Res.">
        <title>Genome sequences of Chlamydia trachomatis MoPn and Chlamydia pneumoniae AR39.</title>
        <authorList>
            <person name="Read T.D."/>
            <person name="Brunham R.C."/>
            <person name="Shen C."/>
            <person name="Gill S.R."/>
            <person name="Heidelberg J.F."/>
            <person name="White O."/>
            <person name="Hickey E.K."/>
            <person name="Peterson J.D."/>
            <person name="Utterback T.R."/>
            <person name="Berry K.J."/>
            <person name="Bass S."/>
            <person name="Linher K.D."/>
            <person name="Weidman J.F."/>
            <person name="Khouri H.M."/>
            <person name="Craven B."/>
            <person name="Bowman C."/>
            <person name="Dodson R.J."/>
            <person name="Gwinn M.L."/>
            <person name="Nelson W.C."/>
            <person name="DeBoy R.T."/>
            <person name="Kolonay J.F."/>
            <person name="McClarty G."/>
            <person name="Salzberg S.L."/>
            <person name="Eisen J.A."/>
            <person name="Fraser C.M."/>
        </authorList>
    </citation>
    <scope>NUCLEOTIDE SEQUENCE [LARGE SCALE GENOMIC DNA]</scope>
    <source>
        <strain>AR39</strain>
    </source>
</reference>
<reference key="4">
    <citation type="journal article" date="2000" name="Nucleic Acids Res.">
        <title>Comparison of whole genome sequences of Chlamydia pneumoniae J138 from Japan and CWL029 from USA.</title>
        <authorList>
            <person name="Shirai M."/>
            <person name="Hirakawa H."/>
            <person name="Kimoto M."/>
            <person name="Tabuchi M."/>
            <person name="Kishi F."/>
            <person name="Ouchi K."/>
            <person name="Shiba T."/>
            <person name="Ishii K."/>
            <person name="Hattori M."/>
            <person name="Kuhara S."/>
            <person name="Nakazawa T."/>
        </authorList>
    </citation>
    <scope>NUCLEOTIDE SEQUENCE [LARGE SCALE GENOMIC DNA]</scope>
    <source>
        <strain>J138</strain>
    </source>
</reference>
<reference key="5">
    <citation type="submission" date="2002-05" db="EMBL/GenBank/DDBJ databases">
        <title>The genome sequence of Chlamydia pneumoniae TW183 and comparison with other Chlamydia strains based on whole genome sequence analysis.</title>
        <authorList>
            <person name="Geng M.M."/>
            <person name="Schuhmacher A."/>
            <person name="Muehldorfer I."/>
            <person name="Bensch K.W."/>
            <person name="Schaefer K.P."/>
            <person name="Schneider S."/>
            <person name="Pohl T."/>
            <person name="Essig A."/>
            <person name="Marre R."/>
            <person name="Melchers K."/>
        </authorList>
    </citation>
    <scope>NUCLEOTIDE SEQUENCE [LARGE SCALE GENOMIC DNA]</scope>
    <source>
        <strain>TW-183</strain>
    </source>
</reference>
<proteinExistence type="inferred from homology"/>